<gene>
    <name evidence="1" type="primary">moaC</name>
    <name type="ordered locus">E2348C_0735</name>
</gene>
<name>MOAC_ECO27</name>
<feature type="chain" id="PRO_1000164888" description="Cyclic pyranopterin monophosphate synthase">
    <location>
        <begin position="1"/>
        <end position="161"/>
    </location>
</feature>
<feature type="active site" evidence="1">
    <location>
        <position position="128"/>
    </location>
</feature>
<feature type="binding site" evidence="1">
    <location>
        <begin position="75"/>
        <end position="77"/>
    </location>
    <ligand>
        <name>substrate</name>
    </ligand>
</feature>
<feature type="binding site" evidence="1">
    <location>
        <begin position="113"/>
        <end position="114"/>
    </location>
    <ligand>
        <name>substrate</name>
    </ligand>
</feature>
<comment type="function">
    <text evidence="1">Catalyzes the conversion of (8S)-3',8-cyclo-7,8-dihydroguanosine 5'-triphosphate to cyclic pyranopterin monophosphate (cPMP).</text>
</comment>
<comment type="catalytic activity">
    <reaction evidence="1">
        <text>(8S)-3',8-cyclo-7,8-dihydroguanosine 5'-triphosphate = cyclic pyranopterin phosphate + diphosphate</text>
        <dbReference type="Rhea" id="RHEA:49580"/>
        <dbReference type="ChEBI" id="CHEBI:33019"/>
        <dbReference type="ChEBI" id="CHEBI:59648"/>
        <dbReference type="ChEBI" id="CHEBI:131766"/>
        <dbReference type="EC" id="4.6.1.17"/>
    </reaction>
</comment>
<comment type="pathway">
    <text evidence="1">Cofactor biosynthesis; molybdopterin biosynthesis.</text>
</comment>
<comment type="subunit">
    <text evidence="1">Homohexamer; trimer of dimers.</text>
</comment>
<comment type="similarity">
    <text evidence="1">Belongs to the MoaC family.</text>
</comment>
<proteinExistence type="inferred from homology"/>
<evidence type="ECO:0000255" key="1">
    <source>
        <dbReference type="HAMAP-Rule" id="MF_01224"/>
    </source>
</evidence>
<accession>B7ULY0</accession>
<sequence length="161" mass="17467">MSQLTHINAAGEAHMVDVSAKAETVREARAEAFVTMRSETLAMIIDGRHHKGDVFATARIAGIQAAKRTWDLIPLCHPLMLSKVEVNLQAEPEHNRVRIETLCRLTGKTGVEMEALTAASVAALTIYDMCKAVQKDMVIGPVRLLAKSGGKSGDFKVEADD</sequence>
<protein>
    <recommendedName>
        <fullName evidence="1">Cyclic pyranopterin monophosphate synthase</fullName>
        <ecNumber evidence="1">4.6.1.17</ecNumber>
    </recommendedName>
    <alternativeName>
        <fullName evidence="1">Molybdenum cofactor biosynthesis protein C</fullName>
    </alternativeName>
</protein>
<reference key="1">
    <citation type="journal article" date="2009" name="J. Bacteriol.">
        <title>Complete genome sequence and comparative genome analysis of enteropathogenic Escherichia coli O127:H6 strain E2348/69.</title>
        <authorList>
            <person name="Iguchi A."/>
            <person name="Thomson N.R."/>
            <person name="Ogura Y."/>
            <person name="Saunders D."/>
            <person name="Ooka T."/>
            <person name="Henderson I.R."/>
            <person name="Harris D."/>
            <person name="Asadulghani M."/>
            <person name="Kurokawa K."/>
            <person name="Dean P."/>
            <person name="Kenny B."/>
            <person name="Quail M.A."/>
            <person name="Thurston S."/>
            <person name="Dougan G."/>
            <person name="Hayashi T."/>
            <person name="Parkhill J."/>
            <person name="Frankel G."/>
        </authorList>
    </citation>
    <scope>NUCLEOTIDE SEQUENCE [LARGE SCALE GENOMIC DNA]</scope>
    <source>
        <strain>E2348/69 / EPEC</strain>
    </source>
</reference>
<organism>
    <name type="scientific">Escherichia coli O127:H6 (strain E2348/69 / EPEC)</name>
    <dbReference type="NCBI Taxonomy" id="574521"/>
    <lineage>
        <taxon>Bacteria</taxon>
        <taxon>Pseudomonadati</taxon>
        <taxon>Pseudomonadota</taxon>
        <taxon>Gammaproteobacteria</taxon>
        <taxon>Enterobacterales</taxon>
        <taxon>Enterobacteriaceae</taxon>
        <taxon>Escherichia</taxon>
    </lineage>
</organism>
<dbReference type="EC" id="4.6.1.17" evidence="1"/>
<dbReference type="EMBL" id="FM180568">
    <property type="protein sequence ID" value="CAS08283.1"/>
    <property type="molecule type" value="Genomic_DNA"/>
</dbReference>
<dbReference type="RefSeq" id="WP_000080885.1">
    <property type="nucleotide sequence ID" value="NC_011601.1"/>
</dbReference>
<dbReference type="SMR" id="B7ULY0"/>
<dbReference type="GeneID" id="86945666"/>
<dbReference type="KEGG" id="ecg:E2348C_0735"/>
<dbReference type="HOGENOM" id="CLU_074693_1_1_6"/>
<dbReference type="UniPathway" id="UPA00344"/>
<dbReference type="Proteomes" id="UP000008205">
    <property type="component" value="Chromosome"/>
</dbReference>
<dbReference type="GO" id="GO:0061799">
    <property type="term" value="F:cyclic pyranopterin monophosphate synthase activity"/>
    <property type="evidence" value="ECO:0007669"/>
    <property type="project" value="UniProtKB-UniRule"/>
</dbReference>
<dbReference type="GO" id="GO:0006777">
    <property type="term" value="P:Mo-molybdopterin cofactor biosynthetic process"/>
    <property type="evidence" value="ECO:0007669"/>
    <property type="project" value="UniProtKB-UniRule"/>
</dbReference>
<dbReference type="CDD" id="cd01420">
    <property type="entry name" value="MoaC_PE"/>
    <property type="match status" value="1"/>
</dbReference>
<dbReference type="FunFam" id="3.30.70.640:FF:000001">
    <property type="entry name" value="Cyclic pyranopterin monophosphate synthase"/>
    <property type="match status" value="1"/>
</dbReference>
<dbReference type="Gene3D" id="3.30.70.640">
    <property type="entry name" value="Molybdopterin cofactor biosynthesis C (MoaC) domain"/>
    <property type="match status" value="1"/>
</dbReference>
<dbReference type="HAMAP" id="MF_01224_B">
    <property type="entry name" value="MoaC_B"/>
    <property type="match status" value="1"/>
</dbReference>
<dbReference type="InterPro" id="IPR023045">
    <property type="entry name" value="MoaC"/>
</dbReference>
<dbReference type="InterPro" id="IPR047594">
    <property type="entry name" value="MoaC_bact/euk"/>
</dbReference>
<dbReference type="InterPro" id="IPR036522">
    <property type="entry name" value="MoaC_sf"/>
</dbReference>
<dbReference type="InterPro" id="IPR050105">
    <property type="entry name" value="MoCo_biosynth_MoaA/MoaC"/>
</dbReference>
<dbReference type="InterPro" id="IPR002820">
    <property type="entry name" value="Mopterin_CF_biosynth-C_dom"/>
</dbReference>
<dbReference type="NCBIfam" id="TIGR00581">
    <property type="entry name" value="moaC"/>
    <property type="match status" value="1"/>
</dbReference>
<dbReference type="NCBIfam" id="NF006870">
    <property type="entry name" value="PRK09364.1"/>
    <property type="match status" value="1"/>
</dbReference>
<dbReference type="PANTHER" id="PTHR22960">
    <property type="entry name" value="MOLYBDOPTERIN COFACTOR SYNTHESIS PROTEIN A"/>
    <property type="match status" value="1"/>
</dbReference>
<dbReference type="Pfam" id="PF01967">
    <property type="entry name" value="MoaC"/>
    <property type="match status" value="1"/>
</dbReference>
<dbReference type="SUPFAM" id="SSF55040">
    <property type="entry name" value="Molybdenum cofactor biosynthesis protein C, MoaC"/>
    <property type="match status" value="1"/>
</dbReference>
<keyword id="KW-0456">Lyase</keyword>
<keyword id="KW-0501">Molybdenum cofactor biosynthesis</keyword>
<keyword id="KW-1185">Reference proteome</keyword>